<comment type="function">
    <text evidence="1">Catalyzes the condensation of ribulose 5-phosphate with formaldehyde to form 3-hexulose 6-phosphate.</text>
</comment>
<comment type="catalytic activity">
    <reaction>
        <text>D-ribulose 5-phosphate + formaldehyde = D-arabino-hex-3-ulose 6-phosphate</text>
        <dbReference type="Rhea" id="RHEA:25201"/>
        <dbReference type="ChEBI" id="CHEBI:16842"/>
        <dbReference type="ChEBI" id="CHEBI:58121"/>
        <dbReference type="ChEBI" id="CHEBI:58542"/>
        <dbReference type="EC" id="4.1.2.43"/>
    </reaction>
</comment>
<comment type="pathway">
    <text>One-carbon metabolism; formaldehyde assimilation via RuMP pathway; D-fructose 6-phosphate from D-ribulose 5-phosphate and formaldehyde: step 1/2.</text>
</comment>
<comment type="similarity">
    <text evidence="2">Belongs to the HPS/KGPDC family. HPS subfamily.</text>
</comment>
<protein>
    <recommendedName>
        <fullName>3-hexulose-6-phosphate synthase</fullName>
        <shortName>HPS</shortName>
        <ecNumber>4.1.2.43</ecNumber>
    </recommendedName>
    <alternativeName>
        <fullName>D-arabino-3-hexulose-6-phosphate formaldehyde lyase</fullName>
    </alternativeName>
</protein>
<sequence length="210" mass="22418">MELQLAIDLLNKEDAAELANKVKDYVDIVEIGTPIIYNEGLPAVKHMADNISNVKVLADMKIIDAADYEVSQAIKFGADVITILGVAEDASIKAAIEEAHKNNKQLLVDMIAVQDLEKRAKELDEMGADYIAVHTGYDLQAEGQSPLESLRTVKSVIKNSKVAVAGGIKPDTIKDIVAESPDLVIVGGGIANADDPVEAAKQCRAAIEGK</sequence>
<proteinExistence type="inferred from homology"/>
<name>HPS_STAA3</name>
<feature type="chain" id="PRO_0000269515" description="3-hexulose-6-phosphate synthase">
    <location>
        <begin position="1"/>
        <end position="210"/>
    </location>
</feature>
<organism>
    <name type="scientific">Staphylococcus aureus (strain USA300)</name>
    <dbReference type="NCBI Taxonomy" id="367830"/>
    <lineage>
        <taxon>Bacteria</taxon>
        <taxon>Bacillati</taxon>
        <taxon>Bacillota</taxon>
        <taxon>Bacilli</taxon>
        <taxon>Bacillales</taxon>
        <taxon>Staphylococcaceae</taxon>
        <taxon>Staphylococcus</taxon>
    </lineage>
</organism>
<reference key="1">
    <citation type="journal article" date="2006" name="Lancet">
        <title>Complete genome sequence of USA300, an epidemic clone of community-acquired meticillin-resistant Staphylococcus aureus.</title>
        <authorList>
            <person name="Diep B.A."/>
            <person name="Gill S.R."/>
            <person name="Chang R.F."/>
            <person name="Phan T.H."/>
            <person name="Chen J.H."/>
            <person name="Davidson M.G."/>
            <person name="Lin F."/>
            <person name="Lin J."/>
            <person name="Carleton H.A."/>
            <person name="Mongodin E.F."/>
            <person name="Sensabaugh G.F."/>
            <person name="Perdreau-Remington F."/>
        </authorList>
    </citation>
    <scope>NUCLEOTIDE SEQUENCE [LARGE SCALE GENOMIC DNA]</scope>
    <source>
        <strain>USA300</strain>
    </source>
</reference>
<accession>Q2FJ70</accession>
<keyword id="KW-0119">Carbohydrate metabolism</keyword>
<keyword id="KW-0456">Lyase</keyword>
<keyword id="KW-0554">One-carbon metabolism</keyword>
<gene>
    <name type="ordered locus">SAUSA300_0555</name>
</gene>
<evidence type="ECO:0000250" key="1"/>
<evidence type="ECO:0000305" key="2"/>
<dbReference type="EC" id="4.1.2.43"/>
<dbReference type="EMBL" id="CP000255">
    <property type="protein sequence ID" value="ABD21456.1"/>
    <property type="molecule type" value="Genomic_DNA"/>
</dbReference>
<dbReference type="SMR" id="Q2FJ70"/>
<dbReference type="KEGG" id="saa:SAUSA300_0555"/>
<dbReference type="HOGENOM" id="CLU_081825_1_0_9"/>
<dbReference type="OMA" id="WMTVICA"/>
<dbReference type="UniPathway" id="UPA00294">
    <property type="reaction ID" value="UER00434"/>
</dbReference>
<dbReference type="Proteomes" id="UP000001939">
    <property type="component" value="Chromosome"/>
</dbReference>
<dbReference type="GO" id="GO:0033982">
    <property type="term" value="F:3-dehydro-L-gulonate-6-phosphate decarboxylase activity"/>
    <property type="evidence" value="ECO:0007669"/>
    <property type="project" value="TreeGrafter"/>
</dbReference>
<dbReference type="GO" id="GO:0043801">
    <property type="term" value="F:hexulose-6-phosphate synthase activity"/>
    <property type="evidence" value="ECO:0007669"/>
    <property type="project" value="UniProtKB-EC"/>
</dbReference>
<dbReference type="GO" id="GO:0004590">
    <property type="term" value="F:orotidine-5'-phosphate decarboxylase activity"/>
    <property type="evidence" value="ECO:0007669"/>
    <property type="project" value="InterPro"/>
</dbReference>
<dbReference type="GO" id="GO:0006207">
    <property type="term" value="P:'de novo' pyrimidine nucleobase biosynthetic process"/>
    <property type="evidence" value="ECO:0007669"/>
    <property type="project" value="InterPro"/>
</dbReference>
<dbReference type="GO" id="GO:0019647">
    <property type="term" value="P:formaldehyde assimilation via ribulose monophosphate cycle"/>
    <property type="evidence" value="ECO:0007669"/>
    <property type="project" value="UniProtKB-UniPathway"/>
</dbReference>
<dbReference type="GO" id="GO:0019854">
    <property type="term" value="P:L-ascorbic acid catabolic process"/>
    <property type="evidence" value="ECO:0007669"/>
    <property type="project" value="TreeGrafter"/>
</dbReference>
<dbReference type="GO" id="GO:0006730">
    <property type="term" value="P:one-carbon metabolic process"/>
    <property type="evidence" value="ECO:0007669"/>
    <property type="project" value="UniProtKB-KW"/>
</dbReference>
<dbReference type="CDD" id="cd04726">
    <property type="entry name" value="KGPDC_HPS"/>
    <property type="match status" value="1"/>
</dbReference>
<dbReference type="FunFam" id="3.20.20.70:FF:000022">
    <property type="entry name" value="3-keto-L-gulonate-6-phosphate decarboxylase UlaD"/>
    <property type="match status" value="1"/>
</dbReference>
<dbReference type="Gene3D" id="3.20.20.70">
    <property type="entry name" value="Aldolase class I"/>
    <property type="match status" value="1"/>
</dbReference>
<dbReference type="InterPro" id="IPR017553">
    <property type="entry name" value="3-hexulose-6-phosphate_synth"/>
</dbReference>
<dbReference type="InterPro" id="IPR013785">
    <property type="entry name" value="Aldolase_TIM"/>
</dbReference>
<dbReference type="InterPro" id="IPR041710">
    <property type="entry name" value="HPS/KGPDC"/>
</dbReference>
<dbReference type="InterPro" id="IPR001754">
    <property type="entry name" value="OMPdeCOase_dom"/>
</dbReference>
<dbReference type="InterPro" id="IPR011060">
    <property type="entry name" value="RibuloseP-bd_barrel"/>
</dbReference>
<dbReference type="NCBIfam" id="TIGR03128">
    <property type="entry name" value="RuMP_HxlA"/>
    <property type="match status" value="1"/>
</dbReference>
<dbReference type="PANTHER" id="PTHR35039">
    <property type="entry name" value="3-KETO-L-GULONATE-6-PHOSPHATE DECARBOXYLASE SGBH-RELATED"/>
    <property type="match status" value="1"/>
</dbReference>
<dbReference type="PANTHER" id="PTHR35039:SF3">
    <property type="entry name" value="3-KETO-L-GULONATE-6-PHOSPHATE DECARBOXYLASE SGBH-RELATED"/>
    <property type="match status" value="1"/>
</dbReference>
<dbReference type="Pfam" id="PF00215">
    <property type="entry name" value="OMPdecase"/>
    <property type="match status" value="1"/>
</dbReference>
<dbReference type="SMART" id="SM00934">
    <property type="entry name" value="OMPdecase"/>
    <property type="match status" value="1"/>
</dbReference>
<dbReference type="SUPFAM" id="SSF51366">
    <property type="entry name" value="Ribulose-phoshate binding barrel"/>
    <property type="match status" value="1"/>
</dbReference>